<dbReference type="EMBL" id="CP000781">
    <property type="protein sequence ID" value="ABS68341.1"/>
    <property type="molecule type" value="Genomic_DNA"/>
</dbReference>
<dbReference type="SMR" id="A7IJZ8"/>
<dbReference type="STRING" id="78245.Xaut_3111"/>
<dbReference type="KEGG" id="xau:Xaut_3111"/>
<dbReference type="eggNOG" id="COG0333">
    <property type="taxonomic scope" value="Bacteria"/>
</dbReference>
<dbReference type="HOGENOM" id="CLU_129084_2_2_5"/>
<dbReference type="OrthoDB" id="9801927at2"/>
<dbReference type="PhylomeDB" id="A7IJZ8"/>
<dbReference type="Proteomes" id="UP000002417">
    <property type="component" value="Chromosome"/>
</dbReference>
<dbReference type="GO" id="GO:0015934">
    <property type="term" value="C:large ribosomal subunit"/>
    <property type="evidence" value="ECO:0007669"/>
    <property type="project" value="InterPro"/>
</dbReference>
<dbReference type="GO" id="GO:0003735">
    <property type="term" value="F:structural constituent of ribosome"/>
    <property type="evidence" value="ECO:0007669"/>
    <property type="project" value="InterPro"/>
</dbReference>
<dbReference type="GO" id="GO:0006412">
    <property type="term" value="P:translation"/>
    <property type="evidence" value="ECO:0007669"/>
    <property type="project" value="UniProtKB-UniRule"/>
</dbReference>
<dbReference type="Gene3D" id="1.20.5.640">
    <property type="entry name" value="Single helix bin"/>
    <property type="match status" value="1"/>
</dbReference>
<dbReference type="HAMAP" id="MF_00340">
    <property type="entry name" value="Ribosomal_bL32"/>
    <property type="match status" value="1"/>
</dbReference>
<dbReference type="InterPro" id="IPR002677">
    <property type="entry name" value="Ribosomal_bL32"/>
</dbReference>
<dbReference type="InterPro" id="IPR044957">
    <property type="entry name" value="Ribosomal_bL32_bact"/>
</dbReference>
<dbReference type="InterPro" id="IPR011332">
    <property type="entry name" value="Ribosomal_zn-bd"/>
</dbReference>
<dbReference type="NCBIfam" id="TIGR01031">
    <property type="entry name" value="rpmF_bact"/>
    <property type="match status" value="1"/>
</dbReference>
<dbReference type="PANTHER" id="PTHR35534">
    <property type="entry name" value="50S RIBOSOMAL PROTEIN L32"/>
    <property type="match status" value="1"/>
</dbReference>
<dbReference type="PANTHER" id="PTHR35534:SF1">
    <property type="entry name" value="LARGE RIBOSOMAL SUBUNIT PROTEIN BL32"/>
    <property type="match status" value="1"/>
</dbReference>
<dbReference type="Pfam" id="PF01783">
    <property type="entry name" value="Ribosomal_L32p"/>
    <property type="match status" value="1"/>
</dbReference>
<dbReference type="SUPFAM" id="SSF57829">
    <property type="entry name" value="Zn-binding ribosomal proteins"/>
    <property type="match status" value="1"/>
</dbReference>
<feature type="chain" id="PRO_1000120191" description="Large ribosomal subunit protein bL32">
    <location>
        <begin position="1"/>
        <end position="61"/>
    </location>
</feature>
<feature type="region of interest" description="Disordered" evidence="2">
    <location>
        <begin position="1"/>
        <end position="61"/>
    </location>
</feature>
<feature type="compositionally biased region" description="Basic residues" evidence="2">
    <location>
        <begin position="1"/>
        <end position="16"/>
    </location>
</feature>
<feature type="compositionally biased region" description="Basic and acidic residues" evidence="2">
    <location>
        <begin position="28"/>
        <end position="44"/>
    </location>
</feature>
<organism>
    <name type="scientific">Xanthobacter autotrophicus (strain ATCC BAA-1158 / Py2)</name>
    <dbReference type="NCBI Taxonomy" id="78245"/>
    <lineage>
        <taxon>Bacteria</taxon>
        <taxon>Pseudomonadati</taxon>
        <taxon>Pseudomonadota</taxon>
        <taxon>Alphaproteobacteria</taxon>
        <taxon>Hyphomicrobiales</taxon>
        <taxon>Xanthobacteraceae</taxon>
        <taxon>Xanthobacter</taxon>
    </lineage>
</organism>
<accession>A7IJZ8</accession>
<comment type="similarity">
    <text evidence="1">Belongs to the bacterial ribosomal protein bL32 family.</text>
</comment>
<keyword id="KW-1185">Reference proteome</keyword>
<keyword id="KW-0687">Ribonucleoprotein</keyword>
<keyword id="KW-0689">Ribosomal protein</keyword>
<reference key="1">
    <citation type="submission" date="2007-07" db="EMBL/GenBank/DDBJ databases">
        <title>Complete sequence of chromosome of Xanthobacter autotrophicus Py2.</title>
        <authorList>
            <consortium name="US DOE Joint Genome Institute"/>
            <person name="Copeland A."/>
            <person name="Lucas S."/>
            <person name="Lapidus A."/>
            <person name="Barry K."/>
            <person name="Glavina del Rio T."/>
            <person name="Hammon N."/>
            <person name="Israni S."/>
            <person name="Dalin E."/>
            <person name="Tice H."/>
            <person name="Pitluck S."/>
            <person name="Sims D."/>
            <person name="Brettin T."/>
            <person name="Bruce D."/>
            <person name="Detter J.C."/>
            <person name="Han C."/>
            <person name="Tapia R."/>
            <person name="Brainard J."/>
            <person name="Schmutz J."/>
            <person name="Larimer F."/>
            <person name="Land M."/>
            <person name="Hauser L."/>
            <person name="Kyrpides N."/>
            <person name="Kim E."/>
            <person name="Ensigns S.A."/>
            <person name="Richardson P."/>
        </authorList>
    </citation>
    <scope>NUCLEOTIDE SEQUENCE [LARGE SCALE GENOMIC DNA]</scope>
    <source>
        <strain>ATCC BAA-1158 / Py2</strain>
    </source>
</reference>
<name>RL32_XANP2</name>
<protein>
    <recommendedName>
        <fullName evidence="1">Large ribosomal subunit protein bL32</fullName>
    </recommendedName>
    <alternativeName>
        <fullName evidence="3">50S ribosomal protein L32</fullName>
    </alternativeName>
</protein>
<gene>
    <name evidence="1" type="primary">rpmF</name>
    <name type="ordered locus">Xaut_3111</name>
</gene>
<proteinExistence type="inferred from homology"/>
<sequence length="61" mass="7017">MAVPKRKTSPSRRGMRRSADALKQPTYVEDKDSGELRRPHHLDLKTGMYRGRQILKPKAEA</sequence>
<evidence type="ECO:0000255" key="1">
    <source>
        <dbReference type="HAMAP-Rule" id="MF_00340"/>
    </source>
</evidence>
<evidence type="ECO:0000256" key="2">
    <source>
        <dbReference type="SAM" id="MobiDB-lite"/>
    </source>
</evidence>
<evidence type="ECO:0000305" key="3"/>